<evidence type="ECO:0000255" key="1">
    <source>
        <dbReference type="HAMAP-Rule" id="MF_00129"/>
    </source>
</evidence>
<keyword id="KW-0963">Cytoplasm</keyword>
<keyword id="KW-0274">FAD</keyword>
<keyword id="KW-0285">Flavoprotein</keyword>
<keyword id="KW-0520">NAD</keyword>
<keyword id="KW-0819">tRNA processing</keyword>
<dbReference type="EMBL" id="CP000261">
    <property type="protein sequence ID" value="ABF36921.1"/>
    <property type="molecule type" value="Genomic_DNA"/>
</dbReference>
<dbReference type="SMR" id="Q1J990"/>
<dbReference type="KEGG" id="spj:MGAS2096_Spy1869"/>
<dbReference type="HOGENOM" id="CLU_007831_2_2_9"/>
<dbReference type="GO" id="GO:0005829">
    <property type="term" value="C:cytosol"/>
    <property type="evidence" value="ECO:0007669"/>
    <property type="project" value="TreeGrafter"/>
</dbReference>
<dbReference type="GO" id="GO:0050660">
    <property type="term" value="F:flavin adenine dinucleotide binding"/>
    <property type="evidence" value="ECO:0007669"/>
    <property type="project" value="UniProtKB-UniRule"/>
</dbReference>
<dbReference type="GO" id="GO:0030488">
    <property type="term" value="P:tRNA methylation"/>
    <property type="evidence" value="ECO:0007669"/>
    <property type="project" value="TreeGrafter"/>
</dbReference>
<dbReference type="GO" id="GO:0002098">
    <property type="term" value="P:tRNA wobble uridine modification"/>
    <property type="evidence" value="ECO:0007669"/>
    <property type="project" value="InterPro"/>
</dbReference>
<dbReference type="FunFam" id="1.10.10.1800:FF:000001">
    <property type="entry name" value="tRNA uridine 5-carboxymethylaminomethyl modification enzyme MnmG"/>
    <property type="match status" value="1"/>
</dbReference>
<dbReference type="FunFam" id="1.10.150.570:FF:000001">
    <property type="entry name" value="tRNA uridine 5-carboxymethylaminomethyl modification enzyme MnmG"/>
    <property type="match status" value="1"/>
</dbReference>
<dbReference type="FunFam" id="3.50.50.60:FF:000002">
    <property type="entry name" value="tRNA uridine 5-carboxymethylaminomethyl modification enzyme MnmG"/>
    <property type="match status" value="1"/>
</dbReference>
<dbReference type="FunFam" id="3.50.50.60:FF:000063">
    <property type="entry name" value="tRNA uridine 5-carboxymethylaminomethyl modification enzyme MnmG"/>
    <property type="match status" value="1"/>
</dbReference>
<dbReference type="Gene3D" id="3.50.50.60">
    <property type="entry name" value="FAD/NAD(P)-binding domain"/>
    <property type="match status" value="2"/>
</dbReference>
<dbReference type="Gene3D" id="1.10.150.570">
    <property type="entry name" value="GidA associated domain, C-terminal subdomain"/>
    <property type="match status" value="1"/>
</dbReference>
<dbReference type="Gene3D" id="1.10.10.1800">
    <property type="entry name" value="tRNA uridine 5-carboxymethylaminomethyl modification enzyme MnmG/GidA"/>
    <property type="match status" value="1"/>
</dbReference>
<dbReference type="HAMAP" id="MF_00129">
    <property type="entry name" value="MnmG_GidA"/>
    <property type="match status" value="1"/>
</dbReference>
<dbReference type="InterPro" id="IPR036188">
    <property type="entry name" value="FAD/NAD-bd_sf"/>
</dbReference>
<dbReference type="InterPro" id="IPR049312">
    <property type="entry name" value="GIDA_C_N"/>
</dbReference>
<dbReference type="InterPro" id="IPR004416">
    <property type="entry name" value="MnmG"/>
</dbReference>
<dbReference type="InterPro" id="IPR002218">
    <property type="entry name" value="MnmG-rel"/>
</dbReference>
<dbReference type="InterPro" id="IPR020595">
    <property type="entry name" value="MnmG-rel_CS"/>
</dbReference>
<dbReference type="InterPro" id="IPR026904">
    <property type="entry name" value="MnmG_C"/>
</dbReference>
<dbReference type="InterPro" id="IPR047001">
    <property type="entry name" value="MnmG_C_subdom"/>
</dbReference>
<dbReference type="InterPro" id="IPR044920">
    <property type="entry name" value="MnmG_C_subdom_sf"/>
</dbReference>
<dbReference type="InterPro" id="IPR040131">
    <property type="entry name" value="MnmG_N"/>
</dbReference>
<dbReference type="NCBIfam" id="TIGR00136">
    <property type="entry name" value="mnmG_gidA"/>
    <property type="match status" value="1"/>
</dbReference>
<dbReference type="PANTHER" id="PTHR11806">
    <property type="entry name" value="GLUCOSE INHIBITED DIVISION PROTEIN A"/>
    <property type="match status" value="1"/>
</dbReference>
<dbReference type="PANTHER" id="PTHR11806:SF0">
    <property type="entry name" value="PROTEIN MTO1 HOMOLOG, MITOCHONDRIAL"/>
    <property type="match status" value="1"/>
</dbReference>
<dbReference type="Pfam" id="PF01134">
    <property type="entry name" value="GIDA"/>
    <property type="match status" value="1"/>
</dbReference>
<dbReference type="Pfam" id="PF21680">
    <property type="entry name" value="GIDA_C_1st"/>
    <property type="match status" value="1"/>
</dbReference>
<dbReference type="Pfam" id="PF13932">
    <property type="entry name" value="SAM_GIDA_C"/>
    <property type="match status" value="1"/>
</dbReference>
<dbReference type="PRINTS" id="PR00411">
    <property type="entry name" value="PNDRDTASEI"/>
</dbReference>
<dbReference type="SMART" id="SM01228">
    <property type="entry name" value="GIDA_assoc_3"/>
    <property type="match status" value="1"/>
</dbReference>
<dbReference type="SUPFAM" id="SSF51905">
    <property type="entry name" value="FAD/NAD(P)-binding domain"/>
    <property type="match status" value="1"/>
</dbReference>
<dbReference type="PROSITE" id="PS01280">
    <property type="entry name" value="GIDA_1"/>
    <property type="match status" value="1"/>
</dbReference>
<dbReference type="PROSITE" id="PS01281">
    <property type="entry name" value="GIDA_2"/>
    <property type="match status" value="1"/>
</dbReference>
<comment type="function">
    <text evidence="1">NAD-binding protein involved in the addition of a carboxymethylaminomethyl (cmnm) group at the wobble position (U34) of certain tRNAs, forming tRNA-cmnm(5)s(2)U34.</text>
</comment>
<comment type="cofactor">
    <cofactor evidence="1">
        <name>FAD</name>
        <dbReference type="ChEBI" id="CHEBI:57692"/>
    </cofactor>
</comment>
<comment type="subunit">
    <text evidence="1">Homodimer. Heterotetramer of two MnmE and two MnmG subunits.</text>
</comment>
<comment type="subcellular location">
    <subcellularLocation>
        <location evidence="1">Cytoplasm</location>
    </subcellularLocation>
</comment>
<comment type="similarity">
    <text evidence="1">Belongs to the MnmG family.</text>
</comment>
<sequence length="632" mass="70127">MTHEFTESYDVIVIGAGHAGVEASLATSRMGCKTLLATINLDMLAFMPCNPSIGGSAKGIVVREIDALGGEMGKNIDKTYIQMKMLNTGKGPAVRALRAQADKSLYAREMKHTVEKQANLTLRQTMIDDILVEDGRVVGVLTATGQKFAAKAVVVTTGTALRGEIILGELKYSSGPNNSLASVTLADNLKKLGLEIGRFKTGTPPRVKASSINYDQTEIQPGDDKPNHFSFMSKDADYLKDQIPCWLTYTNQTSHDIINQNLYRAPMFSGIVKGVGPRYCPSIEDKIVRFADKERHQLFLEPEGRDTEEVYVQGLSTSLPEDVQKDLIHSIKGLEKAEMMRTGYAIEYDIVLPHQLRATLETKLISGLFTAGQTNGTSGYEEAAGQGLIAGINAALKVQGKPELILKRSDAYIGVMIDDLVTKGTLEPYRLLTSRAEYRLILRHDNADMRLTEIGRDIGLVDDERWKAFEIKKNQFDNELKRLNSIKLKPVKATNDRVQELGFKPLTDAMTAKEFMRRPEIDYATAVSFVGPAAEDLDAKIIELLETEIKYEGYIRKALDQVAKMKRMEEKRIPANIDWDAIDSIATEARQKFKKINPETIGQASRISGVNPADISILMIYLEGNGKAHRKY</sequence>
<gene>
    <name evidence="1" type="primary">mnmG</name>
    <name evidence="1" type="synonym">gidA</name>
    <name type="ordered locus">MGAS2096_Spy1869</name>
</gene>
<organism>
    <name type="scientific">Streptococcus pyogenes serotype M12 (strain MGAS2096)</name>
    <dbReference type="NCBI Taxonomy" id="370553"/>
    <lineage>
        <taxon>Bacteria</taxon>
        <taxon>Bacillati</taxon>
        <taxon>Bacillota</taxon>
        <taxon>Bacilli</taxon>
        <taxon>Lactobacillales</taxon>
        <taxon>Streptococcaceae</taxon>
        <taxon>Streptococcus</taxon>
    </lineage>
</organism>
<feature type="chain" id="PRO_1000016689" description="tRNA uridine 5-carboxymethylaminomethyl modification enzyme MnmG">
    <location>
        <begin position="1"/>
        <end position="632"/>
    </location>
</feature>
<feature type="binding site" evidence="1">
    <location>
        <begin position="15"/>
        <end position="20"/>
    </location>
    <ligand>
        <name>FAD</name>
        <dbReference type="ChEBI" id="CHEBI:57692"/>
    </ligand>
</feature>
<feature type="binding site" evidence="1">
    <location>
        <position position="127"/>
    </location>
    <ligand>
        <name>FAD</name>
        <dbReference type="ChEBI" id="CHEBI:57692"/>
    </ligand>
</feature>
<feature type="binding site" evidence="1">
    <location>
        <position position="182"/>
    </location>
    <ligand>
        <name>FAD</name>
        <dbReference type="ChEBI" id="CHEBI:57692"/>
    </ligand>
</feature>
<feature type="binding site" evidence="1">
    <location>
        <begin position="276"/>
        <end position="290"/>
    </location>
    <ligand>
        <name>NAD(+)</name>
        <dbReference type="ChEBI" id="CHEBI:57540"/>
    </ligand>
</feature>
<feature type="binding site" evidence="1">
    <location>
        <position position="373"/>
    </location>
    <ligand>
        <name>FAD</name>
        <dbReference type="ChEBI" id="CHEBI:57692"/>
    </ligand>
</feature>
<name>MNMG_STRPB</name>
<accession>Q1J990</accession>
<reference key="1">
    <citation type="journal article" date="2006" name="Proc. Natl. Acad. Sci. U.S.A.">
        <title>Molecular genetic anatomy of inter- and intraserotype variation in the human bacterial pathogen group A Streptococcus.</title>
        <authorList>
            <person name="Beres S.B."/>
            <person name="Richter E.W."/>
            <person name="Nagiec M.J."/>
            <person name="Sumby P."/>
            <person name="Porcella S.F."/>
            <person name="DeLeo F.R."/>
            <person name="Musser J.M."/>
        </authorList>
    </citation>
    <scope>NUCLEOTIDE SEQUENCE [LARGE SCALE GENOMIC DNA]</scope>
    <source>
        <strain>MGAS2096</strain>
    </source>
</reference>
<protein>
    <recommendedName>
        <fullName evidence="1">tRNA uridine 5-carboxymethylaminomethyl modification enzyme MnmG</fullName>
    </recommendedName>
    <alternativeName>
        <fullName evidence="1">Glucose-inhibited division protein A</fullName>
    </alternativeName>
</protein>
<proteinExistence type="inferred from homology"/>